<proteinExistence type="evidence at transcript level"/>
<dbReference type="EMBL" id="BC103409">
    <property type="protein sequence ID" value="AAI03410.1"/>
    <property type="molecule type" value="mRNA"/>
</dbReference>
<dbReference type="RefSeq" id="NP_001029913.1">
    <property type="nucleotide sequence ID" value="NM_001034741.1"/>
</dbReference>
<dbReference type="FunCoup" id="Q3SYT0">
    <property type="interactions" value="2573"/>
</dbReference>
<dbReference type="STRING" id="9913.ENSBTAP00000063579"/>
<dbReference type="PaxDb" id="9913-ENSBTAP00000007762"/>
<dbReference type="GeneID" id="613665"/>
<dbReference type="KEGG" id="bta:613665"/>
<dbReference type="CTD" id="54741"/>
<dbReference type="eggNOG" id="KOG2174">
    <property type="taxonomic scope" value="Eukaryota"/>
</dbReference>
<dbReference type="HOGENOM" id="CLU_134810_2_2_1"/>
<dbReference type="InParanoid" id="Q3SYT0"/>
<dbReference type="OrthoDB" id="14246at2759"/>
<dbReference type="TreeFam" id="TF313689"/>
<dbReference type="Proteomes" id="UP000009136">
    <property type="component" value="Unplaced"/>
</dbReference>
<dbReference type="GO" id="GO:0005768">
    <property type="term" value="C:endosome"/>
    <property type="evidence" value="ECO:0000318"/>
    <property type="project" value="GO_Central"/>
</dbReference>
<dbReference type="GO" id="GO:0010008">
    <property type="term" value="C:endosome membrane"/>
    <property type="evidence" value="ECO:0007669"/>
    <property type="project" value="UniProtKB-SubCell"/>
</dbReference>
<dbReference type="GO" id="GO:0000139">
    <property type="term" value="C:Golgi membrane"/>
    <property type="evidence" value="ECO:0007669"/>
    <property type="project" value="UniProtKB-SubCell"/>
</dbReference>
<dbReference type="GO" id="GO:0032511">
    <property type="term" value="P:late endosome to vacuole transport via multivesicular body sorting pathway"/>
    <property type="evidence" value="ECO:0000318"/>
    <property type="project" value="GO_Central"/>
</dbReference>
<dbReference type="GO" id="GO:0060400">
    <property type="term" value="P:negative regulation of growth hormone receptor signaling pathway"/>
    <property type="evidence" value="ECO:0000318"/>
    <property type="project" value="GO_Central"/>
</dbReference>
<dbReference type="InterPro" id="IPR007262">
    <property type="entry name" value="Vps55/LEPROT"/>
</dbReference>
<dbReference type="PANTHER" id="PTHR12050:SF3">
    <property type="entry name" value="LEPTIN RECEPTOR GENE-RELATED PROTEIN"/>
    <property type="match status" value="1"/>
</dbReference>
<dbReference type="PANTHER" id="PTHR12050">
    <property type="entry name" value="LEPTIN RECEPTOR-RELATED"/>
    <property type="match status" value="1"/>
</dbReference>
<dbReference type="Pfam" id="PF04133">
    <property type="entry name" value="Vps55"/>
    <property type="match status" value="1"/>
</dbReference>
<gene>
    <name type="primary">LEPROT</name>
    <name type="synonym">LEPR</name>
    <name type="synonym">OBR</name>
</gene>
<sequence length="131" mass="14228">MAGVKALVALSFSGAIGLTFLMLGCALEDYGVYWPLFVLIFHAISPIPHFIAKRATYDSDATSSACRELAYFFTTGIVVSAFGFPVILARVSVIKWGACGLVLAGNAVIFLTIQGFFLVFGRGDDFSWEQW</sequence>
<keyword id="KW-0967">Endosome</keyword>
<keyword id="KW-0333">Golgi apparatus</keyword>
<keyword id="KW-0472">Membrane</keyword>
<keyword id="KW-1185">Reference proteome</keyword>
<keyword id="KW-0812">Transmembrane</keyword>
<keyword id="KW-1133">Transmembrane helix</keyword>
<comment type="function">
    <text evidence="1">Negatively regulates leptin receptor (LEPR) cell surface expression, and thus decreases response to leptin/LEP. Negatively regulates growth hormone (GH) receptor cell surface expression in liver. May play a role in liver resistance to GH during periods of reduced nutrient availability (By similarity).</text>
</comment>
<comment type="subunit">
    <text evidence="1">Interacts with LEPR. Interacts with RAB13 (By similarity).</text>
</comment>
<comment type="subcellular location">
    <subcellularLocation>
        <location evidence="1">Golgi apparatus membrane</location>
        <topology evidence="1">Multi-pass membrane protein</topology>
    </subcellularLocation>
    <subcellularLocation>
        <location evidence="1">Endosome membrane</location>
    </subcellularLocation>
</comment>
<comment type="similarity">
    <text evidence="3">Belongs to the OB-RGRP/VPS55 family.</text>
</comment>
<organism>
    <name type="scientific">Bos taurus</name>
    <name type="common">Bovine</name>
    <dbReference type="NCBI Taxonomy" id="9913"/>
    <lineage>
        <taxon>Eukaryota</taxon>
        <taxon>Metazoa</taxon>
        <taxon>Chordata</taxon>
        <taxon>Craniata</taxon>
        <taxon>Vertebrata</taxon>
        <taxon>Euteleostomi</taxon>
        <taxon>Mammalia</taxon>
        <taxon>Eutheria</taxon>
        <taxon>Laurasiatheria</taxon>
        <taxon>Artiodactyla</taxon>
        <taxon>Ruminantia</taxon>
        <taxon>Pecora</taxon>
        <taxon>Bovidae</taxon>
        <taxon>Bovinae</taxon>
        <taxon>Bos</taxon>
    </lineage>
</organism>
<name>OBRG_BOVIN</name>
<evidence type="ECO:0000250" key="1"/>
<evidence type="ECO:0000255" key="2"/>
<evidence type="ECO:0000305" key="3"/>
<accession>Q3SYT0</accession>
<reference key="1">
    <citation type="submission" date="2005-08" db="EMBL/GenBank/DDBJ databases">
        <authorList>
            <consortium name="NIH - Mammalian Gene Collection (MGC) project"/>
        </authorList>
    </citation>
    <scope>NUCLEOTIDE SEQUENCE [LARGE SCALE MRNA]</scope>
    <source>
        <strain>Crossbred X Angus</strain>
        <tissue>Ileum</tissue>
    </source>
</reference>
<feature type="chain" id="PRO_0000397878" description="Leptin receptor gene-related protein">
    <location>
        <begin position="1"/>
        <end position="131"/>
    </location>
</feature>
<feature type="transmembrane region" description="Helical" evidence="2">
    <location>
        <begin position="7"/>
        <end position="27"/>
    </location>
</feature>
<feature type="transmembrane region" description="Helical" evidence="2">
    <location>
        <begin position="32"/>
        <end position="52"/>
    </location>
</feature>
<feature type="transmembrane region" description="Helical" evidence="2">
    <location>
        <begin position="69"/>
        <end position="89"/>
    </location>
</feature>
<feature type="transmembrane region" description="Helical" evidence="2">
    <location>
        <begin position="100"/>
        <end position="120"/>
    </location>
</feature>
<protein>
    <recommendedName>
        <fullName>Leptin receptor gene-related protein</fullName>
    </recommendedName>
    <alternativeName>
        <fullName>Endospanin-1</fullName>
    </alternativeName>
    <alternativeName>
        <fullName>OB-R gene-related protein</fullName>
        <shortName>OB-RGRP</shortName>
    </alternativeName>
</protein>